<dbReference type="EMBL" id="AE009439">
    <property type="protein sequence ID" value="AAM01936.1"/>
    <property type="molecule type" value="Genomic_DNA"/>
</dbReference>
<dbReference type="RefSeq" id="WP_011019091.1">
    <property type="nucleotide sequence ID" value="NC_003551.1"/>
</dbReference>
<dbReference type="SMR" id="Q8TXF2"/>
<dbReference type="FunCoup" id="Q8TXF2">
    <property type="interactions" value="63"/>
</dbReference>
<dbReference type="STRING" id="190192.MK0722"/>
<dbReference type="PaxDb" id="190192-MK0722"/>
<dbReference type="EnsemblBacteria" id="AAM01936">
    <property type="protein sequence ID" value="AAM01936"/>
    <property type="gene ID" value="MK0722"/>
</dbReference>
<dbReference type="GeneID" id="1476823"/>
<dbReference type="KEGG" id="mka:MK0722"/>
<dbReference type="PATRIC" id="fig|190192.8.peg.763"/>
<dbReference type="HOGENOM" id="CLU_040403_0_0_2"/>
<dbReference type="InParanoid" id="Q8TXF2"/>
<dbReference type="OrthoDB" id="67748at2157"/>
<dbReference type="Proteomes" id="UP000001826">
    <property type="component" value="Chromosome"/>
</dbReference>
<dbReference type="GO" id="GO:0006730">
    <property type="term" value="P:one-carbon metabolic process"/>
    <property type="evidence" value="ECO:0007669"/>
    <property type="project" value="InterPro"/>
</dbReference>
<dbReference type="Gene3D" id="3.20.20.20">
    <property type="entry name" value="Dihydropteroate synthase-like"/>
    <property type="match status" value="1"/>
</dbReference>
<dbReference type="HAMAP" id="MF_01135">
    <property type="entry name" value="CdhD"/>
    <property type="match status" value="1"/>
</dbReference>
<dbReference type="InterPro" id="IPR016041">
    <property type="entry name" value="Ac-CoA_synth_d_su_TIM-brl"/>
</dbReference>
<dbReference type="InterPro" id="IPR051069">
    <property type="entry name" value="ACDS_complex_subunit"/>
</dbReference>
<dbReference type="InterPro" id="IPR004486">
    <property type="entry name" value="CO_DH/Ac-CoA_synth_dsu"/>
</dbReference>
<dbReference type="InterPro" id="IPR011005">
    <property type="entry name" value="Dihydropteroate_synth-like_sf"/>
</dbReference>
<dbReference type="NCBIfam" id="TIGR00381">
    <property type="entry name" value="cdhD"/>
    <property type="match status" value="1"/>
</dbReference>
<dbReference type="NCBIfam" id="NF003375">
    <property type="entry name" value="PRK04452.1-1"/>
    <property type="match status" value="1"/>
</dbReference>
<dbReference type="PANTHER" id="PTHR36214">
    <property type="match status" value="1"/>
</dbReference>
<dbReference type="PANTHER" id="PTHR36214:SF5">
    <property type="entry name" value="ACETYL-COA DECARBONYLASE_SYNTHASE COMPLEX SUBUNIT DELTA"/>
    <property type="match status" value="1"/>
</dbReference>
<dbReference type="Pfam" id="PF03599">
    <property type="entry name" value="CdhD"/>
    <property type="match status" value="1"/>
</dbReference>
<dbReference type="SUPFAM" id="SSF51717">
    <property type="entry name" value="Dihydropteroate synthetase-like"/>
    <property type="match status" value="1"/>
</dbReference>
<comment type="function">
    <text evidence="1">Part of a complex that catalyzes the reversible cleavage of acetyl-CoA, allowing autotrophic growth from CO(2). Probably maintains the overall quaternary structure of the ACDS complex.</text>
</comment>
<comment type="subunit">
    <text evidence="1">Heterodimer of delta and gamma chains. The ACDS complex is made up of alpha, epsilon, beta, gamma and delta chains with a probable stoichiometry of (alpha(2)epsilon(2))(4)-beta(8)-(gamma(1)delta(1))(8).</text>
</comment>
<comment type="similarity">
    <text evidence="1">Belongs to the CdhD family.</text>
</comment>
<reference key="1">
    <citation type="journal article" date="2002" name="Proc. Natl. Acad. Sci. U.S.A.">
        <title>The complete genome of hyperthermophile Methanopyrus kandleri AV19 and monophyly of archaeal methanogens.</title>
        <authorList>
            <person name="Slesarev A.I."/>
            <person name="Mezhevaya K.V."/>
            <person name="Makarova K.S."/>
            <person name="Polushin N.N."/>
            <person name="Shcherbinina O.V."/>
            <person name="Shakhova V.V."/>
            <person name="Belova G.I."/>
            <person name="Aravind L."/>
            <person name="Natale D.A."/>
            <person name="Rogozin I.B."/>
            <person name="Tatusov R.L."/>
            <person name="Wolf Y.I."/>
            <person name="Stetter K.O."/>
            <person name="Malykh A.G."/>
            <person name="Koonin E.V."/>
            <person name="Kozyavkin S.A."/>
        </authorList>
    </citation>
    <scope>NUCLEOTIDE SEQUENCE [LARGE SCALE GENOMIC DNA]</scope>
    <source>
        <strain>AV19 / DSM 6324 / JCM 9639 / NBRC 100938</strain>
    </source>
</reference>
<gene>
    <name evidence="1" type="primary">cdhD</name>
    <name type="ordered locus">MK0722</name>
</gene>
<keyword id="KW-1185">Reference proteome</keyword>
<organism>
    <name type="scientific">Methanopyrus kandleri (strain AV19 / DSM 6324 / JCM 9639 / NBRC 100938)</name>
    <dbReference type="NCBI Taxonomy" id="190192"/>
    <lineage>
        <taxon>Archaea</taxon>
        <taxon>Methanobacteriati</taxon>
        <taxon>Methanobacteriota</taxon>
        <taxon>Methanomada group</taxon>
        <taxon>Methanopyri</taxon>
        <taxon>Methanopyrales</taxon>
        <taxon>Methanopyraceae</taxon>
        <taxon>Methanopyrus</taxon>
    </lineage>
</organism>
<sequence>MAEDKGVKNMLEHLVKNLLVEDVEEIELRNVTIELDELELDLKTVAQTLPVEIWERILKPEVEEKEREVEVPEYEPPVEEYEGCVAEVQIGATRSDGGSRDRVVVLGGERAYFPFEEPRPNPPVVTFDVFDTPDVGIPGPIREELGDVIEDPVDWARTVVKRYGVDIVTVHLVSTSPKLHDAPVEEAMETLEDILDAVKVPIIVGGSGDPEKDVEVFVKAAEVCEGERVMLSSINEDMDFERVVEAAKEHGHVVLTFAPVDVNLMKSLNKKVLNRGLSKEDVVMDPTTCALGYGIEYTIDVMTRIRLAALKGDEHLQMPISSGSTNAWAAREAWMKEESWGPREYRGPLWEAVTATTVALCGADLLMMFHPWAVQVVMEAMEYMAEGRVTGDAYVTDVIA</sequence>
<evidence type="ECO:0000255" key="1">
    <source>
        <dbReference type="HAMAP-Rule" id="MF_01135"/>
    </source>
</evidence>
<name>ACDD_METKA</name>
<protein>
    <recommendedName>
        <fullName evidence="1">Acetyl-CoA decarbonylase/synthase complex subunit delta</fullName>
        <shortName evidence="1">ACDS complex subunit delta</shortName>
    </recommendedName>
    <alternativeName>
        <fullName evidence="1">Corrinoid/iron-sulfur component small subunit</fullName>
    </alternativeName>
</protein>
<proteinExistence type="inferred from homology"/>
<feature type="chain" id="PRO_0000155113" description="Acetyl-CoA decarbonylase/synthase complex subunit delta">
    <location>
        <begin position="1"/>
        <end position="400"/>
    </location>
</feature>
<accession>Q8TXF2</accession>